<dbReference type="EMBL" id="AY134667">
    <property type="protein sequence ID" value="AAN08618.1"/>
    <property type="molecule type" value="mRNA"/>
</dbReference>
<dbReference type="EMBL" id="BX679674">
    <property type="status" value="NOT_ANNOTATED_CDS"/>
    <property type="molecule type" value="Genomic_DNA"/>
</dbReference>
<dbReference type="EMBL" id="BC048661">
    <property type="protein sequence ID" value="AAH48661.1"/>
    <property type="molecule type" value="mRNA"/>
</dbReference>
<dbReference type="RefSeq" id="NP_780356.1">
    <property type="nucleotide sequence ID" value="NM_175147.2"/>
</dbReference>
<dbReference type="STRING" id="10090.ENSMUSP00000073854"/>
<dbReference type="PaxDb" id="10090-ENSMUSP00000073854"/>
<dbReference type="Ensembl" id="ENSMUST00000074232.7">
    <property type="protein sequence ID" value="ENSMUSP00000073854.7"/>
    <property type="gene ID" value="ENSMUSG00000060967.7"/>
</dbReference>
<dbReference type="GeneID" id="69501"/>
<dbReference type="AGR" id="MGI:1916751"/>
<dbReference type="MGI" id="MGI:1916751">
    <property type="gene designation" value="Etd"/>
</dbReference>
<dbReference type="VEuPathDB" id="HostDB:ENSMUSG00000060967"/>
<dbReference type="GeneTree" id="ENSGT01050000245553"/>
<dbReference type="HOGENOM" id="CLU_2960159_0_0_1"/>
<dbReference type="InParanoid" id="Q80SW5"/>
<dbReference type="PhylomeDB" id="Q80SW5"/>
<dbReference type="TreeFam" id="TF354008"/>
<dbReference type="ChiTaRS" id="Etd">
    <property type="organism name" value="mouse"/>
</dbReference>
<dbReference type="PRO" id="PR:Q80SW5"/>
<dbReference type="Proteomes" id="UP000000589">
    <property type="component" value="Chromosome X"/>
</dbReference>
<dbReference type="RNAct" id="Q80SW5">
    <property type="molecule type" value="protein"/>
</dbReference>
<dbReference type="Bgee" id="ENSMUSG00000060967">
    <property type="expression patterns" value="Expressed in testis and 14 other cell types or tissues"/>
</dbReference>
<keyword id="KW-1185">Reference proteome</keyword>
<protein>
    <recommendedName>
        <fullName evidence="3">Embryonic testis differentiation protein</fullName>
    </recommendedName>
</protein>
<comment type="tissue specificity">
    <text evidence="2">Specifically expressed in testis.</text>
</comment>
<comment type="developmental stage">
    <text evidence="2">Not detected at 9.5 dpc and 10.5 dpc. Specifically expressed in male and not female gonads during their differentiation, from 12.5 dpc to 14.5 dpc.</text>
</comment>
<reference key="1">
    <citation type="journal article" date="2002" name="Gene Expr. Patterns">
        <title>Sexually dimorphic gene expression in the developing mouse gonad.</title>
        <authorList>
            <person name="Menke D.B."/>
            <person name="Page D.C."/>
        </authorList>
    </citation>
    <scope>NUCLEOTIDE SEQUENCE [MRNA]</scope>
    <scope>TISSUE SPECIFICITY</scope>
    <scope>DEVELOPMENTAL STAGE</scope>
    <source>
        <strain>C57BL/6J</strain>
        <tissue>Testis</tissue>
    </source>
</reference>
<reference key="2">
    <citation type="submission" date="2003-10" db="EMBL/GenBank/DDBJ databases">
        <authorList>
            <person name="Mural R.J."/>
            <person name="Adams M.D."/>
            <person name="Myers E.W."/>
            <person name="Smith H.O."/>
            <person name="Venter J.C."/>
        </authorList>
    </citation>
    <scope>NUCLEOTIDE SEQUENCE [LARGE SCALE GENOMIC DNA]</scope>
    <source>
        <strain>C57BL/6J</strain>
    </source>
</reference>
<reference key="3">
    <citation type="journal article" date="2004" name="Genome Res.">
        <title>The status, quality, and expansion of the NIH full-length cDNA project: the Mammalian Gene Collection (MGC).</title>
        <authorList>
            <consortium name="The MGC Project Team"/>
        </authorList>
    </citation>
    <scope>NUCLEOTIDE SEQUENCE [LARGE SCALE MRNA]</scope>
    <source>
        <tissue>Testis</tissue>
    </source>
</reference>
<sequence>MDEKNPEAVPRPPEQNTELVPPKKSKSKKPANILIYLIDRHLGRPRNDMDLFEWVWTLK</sequence>
<name>ETD_MOUSE</name>
<feature type="chain" id="PRO_0000445090" description="Embryonic testis differentiation protein">
    <location>
        <begin position="1"/>
        <end position="59"/>
    </location>
</feature>
<feature type="region of interest" description="Disordered" evidence="1">
    <location>
        <begin position="1"/>
        <end position="28"/>
    </location>
</feature>
<accession>Q80SW5</accession>
<proteinExistence type="evidence at transcript level"/>
<gene>
    <name evidence="4" type="primary">Etd</name>
</gene>
<evidence type="ECO:0000256" key="1">
    <source>
        <dbReference type="SAM" id="MobiDB-lite"/>
    </source>
</evidence>
<evidence type="ECO:0000269" key="2">
    <source>
    </source>
</evidence>
<evidence type="ECO:0000305" key="3"/>
<evidence type="ECO:0000312" key="4">
    <source>
        <dbReference type="MGI" id="MGI:1916751"/>
    </source>
</evidence>
<organism>
    <name type="scientific">Mus musculus</name>
    <name type="common">Mouse</name>
    <dbReference type="NCBI Taxonomy" id="10090"/>
    <lineage>
        <taxon>Eukaryota</taxon>
        <taxon>Metazoa</taxon>
        <taxon>Chordata</taxon>
        <taxon>Craniata</taxon>
        <taxon>Vertebrata</taxon>
        <taxon>Euteleostomi</taxon>
        <taxon>Mammalia</taxon>
        <taxon>Eutheria</taxon>
        <taxon>Euarchontoglires</taxon>
        <taxon>Glires</taxon>
        <taxon>Rodentia</taxon>
        <taxon>Myomorpha</taxon>
        <taxon>Muroidea</taxon>
        <taxon>Muridae</taxon>
        <taxon>Murinae</taxon>
        <taxon>Mus</taxon>
        <taxon>Mus</taxon>
    </lineage>
</organism>